<feature type="chain" id="PRO_1000093682" description="Thiamine-phosphate synthase">
    <location>
        <begin position="1"/>
        <end position="207"/>
    </location>
</feature>
<feature type="binding site" evidence="1">
    <location>
        <begin position="35"/>
        <end position="39"/>
    </location>
    <ligand>
        <name>4-amino-2-methyl-5-(diphosphooxymethyl)pyrimidine</name>
        <dbReference type="ChEBI" id="CHEBI:57841"/>
    </ligand>
</feature>
<feature type="binding site" evidence="1">
    <location>
        <position position="67"/>
    </location>
    <ligand>
        <name>4-amino-2-methyl-5-(diphosphooxymethyl)pyrimidine</name>
        <dbReference type="ChEBI" id="CHEBI:57841"/>
    </ligand>
</feature>
<feature type="binding site" evidence="1">
    <location>
        <position position="68"/>
    </location>
    <ligand>
        <name>Mg(2+)</name>
        <dbReference type="ChEBI" id="CHEBI:18420"/>
    </ligand>
</feature>
<feature type="binding site" evidence="1">
    <location>
        <position position="86"/>
    </location>
    <ligand>
        <name>Mg(2+)</name>
        <dbReference type="ChEBI" id="CHEBI:18420"/>
    </ligand>
</feature>
<feature type="binding site" evidence="1">
    <location>
        <position position="105"/>
    </location>
    <ligand>
        <name>4-amino-2-methyl-5-(diphosphooxymethyl)pyrimidine</name>
        <dbReference type="ChEBI" id="CHEBI:57841"/>
    </ligand>
</feature>
<feature type="binding site" evidence="1">
    <location>
        <begin position="132"/>
        <end position="134"/>
    </location>
    <ligand>
        <name>2-[(2R,5Z)-2-carboxy-4-methylthiazol-5(2H)-ylidene]ethyl phosphate</name>
        <dbReference type="ChEBI" id="CHEBI:62899"/>
    </ligand>
</feature>
<feature type="binding site" evidence="1">
    <location>
        <position position="135"/>
    </location>
    <ligand>
        <name>4-amino-2-methyl-5-(diphosphooxymethyl)pyrimidine</name>
        <dbReference type="ChEBI" id="CHEBI:57841"/>
    </ligand>
</feature>
<feature type="binding site" evidence="1">
    <location>
        <position position="162"/>
    </location>
    <ligand>
        <name>2-[(2R,5Z)-2-carboxy-4-methylthiazol-5(2H)-ylidene]ethyl phosphate</name>
        <dbReference type="ChEBI" id="CHEBI:62899"/>
    </ligand>
</feature>
<accession>B1J1Y7</accession>
<sequence length="207" mass="21667">MKLRGLYAITDSQLLAGRFLTHVEAALEGGVRLLQYRDKSDDAARRLREAQALQKLCERYGTELVINDDAELAARLGVGVHLGQTDGPLTPARALLGRQAIIGSTCHASLDLAAQAASEGASYVAFGRFFNSVTKPGAPAADVGLLAQARGQVKLPIAVIGGITLDNAAPLVAHGADLLAVIHGLFGADSAQEVTRRARAFNALFAS</sequence>
<evidence type="ECO:0000255" key="1">
    <source>
        <dbReference type="HAMAP-Rule" id="MF_00097"/>
    </source>
</evidence>
<name>THIE_PSEPW</name>
<gene>
    <name evidence="1" type="primary">thiE</name>
    <name type="ordered locus">PputW619_0637</name>
</gene>
<comment type="function">
    <text evidence="1">Condenses 4-methyl-5-(beta-hydroxyethyl)thiazole monophosphate (THZ-P) and 2-methyl-4-amino-5-hydroxymethyl pyrimidine pyrophosphate (HMP-PP) to form thiamine monophosphate (TMP).</text>
</comment>
<comment type="catalytic activity">
    <reaction evidence="1">
        <text>2-[(2R,5Z)-2-carboxy-4-methylthiazol-5(2H)-ylidene]ethyl phosphate + 4-amino-2-methyl-5-(diphosphooxymethyl)pyrimidine + 2 H(+) = thiamine phosphate + CO2 + diphosphate</text>
        <dbReference type="Rhea" id="RHEA:47844"/>
        <dbReference type="ChEBI" id="CHEBI:15378"/>
        <dbReference type="ChEBI" id="CHEBI:16526"/>
        <dbReference type="ChEBI" id="CHEBI:33019"/>
        <dbReference type="ChEBI" id="CHEBI:37575"/>
        <dbReference type="ChEBI" id="CHEBI:57841"/>
        <dbReference type="ChEBI" id="CHEBI:62899"/>
        <dbReference type="EC" id="2.5.1.3"/>
    </reaction>
</comment>
<comment type="catalytic activity">
    <reaction evidence="1">
        <text>2-(2-carboxy-4-methylthiazol-5-yl)ethyl phosphate + 4-amino-2-methyl-5-(diphosphooxymethyl)pyrimidine + 2 H(+) = thiamine phosphate + CO2 + diphosphate</text>
        <dbReference type="Rhea" id="RHEA:47848"/>
        <dbReference type="ChEBI" id="CHEBI:15378"/>
        <dbReference type="ChEBI" id="CHEBI:16526"/>
        <dbReference type="ChEBI" id="CHEBI:33019"/>
        <dbReference type="ChEBI" id="CHEBI:37575"/>
        <dbReference type="ChEBI" id="CHEBI:57841"/>
        <dbReference type="ChEBI" id="CHEBI:62890"/>
        <dbReference type="EC" id="2.5.1.3"/>
    </reaction>
</comment>
<comment type="catalytic activity">
    <reaction evidence="1">
        <text>4-methyl-5-(2-phosphooxyethyl)-thiazole + 4-amino-2-methyl-5-(diphosphooxymethyl)pyrimidine + H(+) = thiamine phosphate + diphosphate</text>
        <dbReference type="Rhea" id="RHEA:22328"/>
        <dbReference type="ChEBI" id="CHEBI:15378"/>
        <dbReference type="ChEBI" id="CHEBI:33019"/>
        <dbReference type="ChEBI" id="CHEBI:37575"/>
        <dbReference type="ChEBI" id="CHEBI:57841"/>
        <dbReference type="ChEBI" id="CHEBI:58296"/>
        <dbReference type="EC" id="2.5.1.3"/>
    </reaction>
</comment>
<comment type="cofactor">
    <cofactor evidence="1">
        <name>Mg(2+)</name>
        <dbReference type="ChEBI" id="CHEBI:18420"/>
    </cofactor>
    <text evidence="1">Binds 1 Mg(2+) ion per subunit.</text>
</comment>
<comment type="pathway">
    <text evidence="1">Cofactor biosynthesis; thiamine diphosphate biosynthesis; thiamine phosphate from 4-amino-2-methyl-5-diphosphomethylpyrimidine and 4-methyl-5-(2-phosphoethyl)-thiazole: step 1/1.</text>
</comment>
<comment type="similarity">
    <text evidence="1">Belongs to the thiamine-phosphate synthase family.</text>
</comment>
<proteinExistence type="inferred from homology"/>
<protein>
    <recommendedName>
        <fullName evidence="1">Thiamine-phosphate synthase</fullName>
        <shortName evidence="1">TP synthase</shortName>
        <shortName evidence="1">TPS</shortName>
        <ecNumber evidence="1">2.5.1.3</ecNumber>
    </recommendedName>
    <alternativeName>
        <fullName evidence="1">Thiamine-phosphate pyrophosphorylase</fullName>
        <shortName evidence="1">TMP pyrophosphorylase</shortName>
        <shortName evidence="1">TMP-PPase</shortName>
    </alternativeName>
</protein>
<keyword id="KW-0460">Magnesium</keyword>
<keyword id="KW-0479">Metal-binding</keyword>
<keyword id="KW-0784">Thiamine biosynthesis</keyword>
<keyword id="KW-0808">Transferase</keyword>
<reference key="1">
    <citation type="submission" date="2008-02" db="EMBL/GenBank/DDBJ databases">
        <title>Complete sequence of Pseudomonas putida W619.</title>
        <authorList>
            <person name="Copeland A."/>
            <person name="Lucas S."/>
            <person name="Lapidus A."/>
            <person name="Barry K."/>
            <person name="Detter J.C."/>
            <person name="Glavina del Rio T."/>
            <person name="Dalin E."/>
            <person name="Tice H."/>
            <person name="Pitluck S."/>
            <person name="Chain P."/>
            <person name="Malfatti S."/>
            <person name="Shin M."/>
            <person name="Vergez L."/>
            <person name="Schmutz J."/>
            <person name="Larimer F."/>
            <person name="Land M."/>
            <person name="Hauser L."/>
            <person name="Kyrpides N."/>
            <person name="Kim E."/>
            <person name="Taghavi S."/>
            <person name="Vangronsveld D."/>
            <person name="van der Lelie D."/>
            <person name="Richardson P."/>
        </authorList>
    </citation>
    <scope>NUCLEOTIDE SEQUENCE [LARGE SCALE GENOMIC DNA]</scope>
    <source>
        <strain>W619</strain>
    </source>
</reference>
<organism>
    <name type="scientific">Pseudomonas putida (strain W619)</name>
    <dbReference type="NCBI Taxonomy" id="390235"/>
    <lineage>
        <taxon>Bacteria</taxon>
        <taxon>Pseudomonadati</taxon>
        <taxon>Pseudomonadota</taxon>
        <taxon>Gammaproteobacteria</taxon>
        <taxon>Pseudomonadales</taxon>
        <taxon>Pseudomonadaceae</taxon>
        <taxon>Pseudomonas</taxon>
    </lineage>
</organism>
<dbReference type="EC" id="2.5.1.3" evidence="1"/>
<dbReference type="EMBL" id="CP000949">
    <property type="protein sequence ID" value="ACA71142.1"/>
    <property type="molecule type" value="Genomic_DNA"/>
</dbReference>
<dbReference type="SMR" id="B1J1Y7"/>
<dbReference type="STRING" id="390235.PputW619_0637"/>
<dbReference type="KEGG" id="ppw:PputW619_0637"/>
<dbReference type="eggNOG" id="COG0352">
    <property type="taxonomic scope" value="Bacteria"/>
</dbReference>
<dbReference type="HOGENOM" id="CLU_018272_3_1_6"/>
<dbReference type="OrthoDB" id="9789949at2"/>
<dbReference type="UniPathway" id="UPA00060">
    <property type="reaction ID" value="UER00141"/>
</dbReference>
<dbReference type="GO" id="GO:0005737">
    <property type="term" value="C:cytoplasm"/>
    <property type="evidence" value="ECO:0007669"/>
    <property type="project" value="TreeGrafter"/>
</dbReference>
<dbReference type="GO" id="GO:0000287">
    <property type="term" value="F:magnesium ion binding"/>
    <property type="evidence" value="ECO:0007669"/>
    <property type="project" value="UniProtKB-UniRule"/>
</dbReference>
<dbReference type="GO" id="GO:0004789">
    <property type="term" value="F:thiamine-phosphate diphosphorylase activity"/>
    <property type="evidence" value="ECO:0007669"/>
    <property type="project" value="UniProtKB-UniRule"/>
</dbReference>
<dbReference type="GO" id="GO:0009228">
    <property type="term" value="P:thiamine biosynthetic process"/>
    <property type="evidence" value="ECO:0007669"/>
    <property type="project" value="UniProtKB-KW"/>
</dbReference>
<dbReference type="GO" id="GO:0009229">
    <property type="term" value="P:thiamine diphosphate biosynthetic process"/>
    <property type="evidence" value="ECO:0007669"/>
    <property type="project" value="UniProtKB-UniRule"/>
</dbReference>
<dbReference type="CDD" id="cd00564">
    <property type="entry name" value="TMP_TenI"/>
    <property type="match status" value="1"/>
</dbReference>
<dbReference type="Gene3D" id="3.20.20.70">
    <property type="entry name" value="Aldolase class I"/>
    <property type="match status" value="1"/>
</dbReference>
<dbReference type="HAMAP" id="MF_00097">
    <property type="entry name" value="TMP_synthase"/>
    <property type="match status" value="1"/>
</dbReference>
<dbReference type="InterPro" id="IPR013785">
    <property type="entry name" value="Aldolase_TIM"/>
</dbReference>
<dbReference type="InterPro" id="IPR036206">
    <property type="entry name" value="ThiamineP_synth_sf"/>
</dbReference>
<dbReference type="InterPro" id="IPR022998">
    <property type="entry name" value="ThiamineP_synth_TenI"/>
</dbReference>
<dbReference type="InterPro" id="IPR034291">
    <property type="entry name" value="TMP_synthase"/>
</dbReference>
<dbReference type="NCBIfam" id="TIGR00693">
    <property type="entry name" value="thiE"/>
    <property type="match status" value="1"/>
</dbReference>
<dbReference type="PANTHER" id="PTHR20857">
    <property type="entry name" value="THIAMINE-PHOSPHATE PYROPHOSPHORYLASE"/>
    <property type="match status" value="1"/>
</dbReference>
<dbReference type="PANTHER" id="PTHR20857:SF15">
    <property type="entry name" value="THIAMINE-PHOSPHATE SYNTHASE"/>
    <property type="match status" value="1"/>
</dbReference>
<dbReference type="Pfam" id="PF02581">
    <property type="entry name" value="TMP-TENI"/>
    <property type="match status" value="1"/>
</dbReference>
<dbReference type="SUPFAM" id="SSF51391">
    <property type="entry name" value="Thiamin phosphate synthase"/>
    <property type="match status" value="1"/>
</dbReference>